<organism>
    <name type="scientific">Methanocaldococcus jannaschii (strain ATCC 43067 / DSM 2661 / JAL-1 / JCM 10045 / NBRC 100440)</name>
    <name type="common">Methanococcus jannaschii</name>
    <dbReference type="NCBI Taxonomy" id="243232"/>
    <lineage>
        <taxon>Archaea</taxon>
        <taxon>Methanobacteriati</taxon>
        <taxon>Methanobacteriota</taxon>
        <taxon>Methanomada group</taxon>
        <taxon>Methanococci</taxon>
        <taxon>Methanococcales</taxon>
        <taxon>Methanocaldococcaceae</taxon>
        <taxon>Methanocaldococcus</taxon>
    </lineage>
</organism>
<protein>
    <recommendedName>
        <fullName>Uncharacterized protein MJ0991</fullName>
    </recommendedName>
</protein>
<feature type="chain" id="PRO_0000107134" description="Uncharacterized protein MJ0991">
    <location>
        <begin position="1"/>
        <end position="144"/>
    </location>
</feature>
<proteinExistence type="predicted"/>
<sequence length="144" mass="17271">MVIIMPTKTITLKVPSNISKKKIEEAIKKLELEEKYKKTENFKLFVKDEDLKMKIYKIAEFVEDYLKKKYSDEEFEIVLDYDGIDDKVVVEIVFKKKLDKRELKDIKVIIRKLKEIIFDAWRKVDEKYPDMRGFLIVTSDLEVL</sequence>
<name>Y991_METJA</name>
<accession>Q58398</accession>
<dbReference type="EMBL" id="L77117">
    <property type="protein sequence ID" value="AAB98996.1"/>
    <property type="molecule type" value="Genomic_DNA"/>
</dbReference>
<dbReference type="PIR" id="G64423">
    <property type="entry name" value="G64423"/>
</dbReference>
<dbReference type="SMR" id="Q58398"/>
<dbReference type="STRING" id="243232.MJ_0991"/>
<dbReference type="PaxDb" id="243232-MJ_0991"/>
<dbReference type="EnsemblBacteria" id="AAB98996">
    <property type="protein sequence ID" value="AAB98996"/>
    <property type="gene ID" value="MJ_0991"/>
</dbReference>
<dbReference type="KEGG" id="mja:MJ_0991"/>
<dbReference type="eggNOG" id="arCOG09630">
    <property type="taxonomic scope" value="Archaea"/>
</dbReference>
<dbReference type="HOGENOM" id="CLU_150439_0_0_2"/>
<dbReference type="InParanoid" id="Q58398"/>
<dbReference type="OrthoDB" id="384140at2157"/>
<dbReference type="Proteomes" id="UP000000805">
    <property type="component" value="Chromosome"/>
</dbReference>
<gene>
    <name type="ordered locus">MJ0991</name>
</gene>
<reference key="1">
    <citation type="journal article" date="1996" name="Science">
        <title>Complete genome sequence of the methanogenic archaeon, Methanococcus jannaschii.</title>
        <authorList>
            <person name="Bult C.J."/>
            <person name="White O."/>
            <person name="Olsen G.J."/>
            <person name="Zhou L."/>
            <person name="Fleischmann R.D."/>
            <person name="Sutton G.G."/>
            <person name="Blake J.A."/>
            <person name="FitzGerald L.M."/>
            <person name="Clayton R.A."/>
            <person name="Gocayne J.D."/>
            <person name="Kerlavage A.R."/>
            <person name="Dougherty B.A."/>
            <person name="Tomb J.-F."/>
            <person name="Adams M.D."/>
            <person name="Reich C.I."/>
            <person name="Overbeek R."/>
            <person name="Kirkness E.F."/>
            <person name="Weinstock K.G."/>
            <person name="Merrick J.M."/>
            <person name="Glodek A."/>
            <person name="Scott J.L."/>
            <person name="Geoghagen N.S.M."/>
            <person name="Weidman J.F."/>
            <person name="Fuhrmann J.L."/>
            <person name="Nguyen D."/>
            <person name="Utterback T.R."/>
            <person name="Kelley J.M."/>
            <person name="Peterson J.D."/>
            <person name="Sadow P.W."/>
            <person name="Hanna M.C."/>
            <person name="Cotton M.D."/>
            <person name="Roberts K.M."/>
            <person name="Hurst M.A."/>
            <person name="Kaine B.P."/>
            <person name="Borodovsky M."/>
            <person name="Klenk H.-P."/>
            <person name="Fraser C.M."/>
            <person name="Smith H.O."/>
            <person name="Woese C.R."/>
            <person name="Venter J.C."/>
        </authorList>
    </citation>
    <scope>NUCLEOTIDE SEQUENCE [LARGE SCALE GENOMIC DNA]</scope>
    <source>
        <strain>ATCC 43067 / DSM 2661 / JAL-1 / JCM 10045 / NBRC 100440</strain>
    </source>
</reference>
<keyword id="KW-1185">Reference proteome</keyword>